<keyword id="KW-1185">Reference proteome</keyword>
<keyword id="KW-0687">Ribonucleoprotein</keyword>
<keyword id="KW-0689">Ribosomal protein</keyword>
<accession>B2GD87</accession>
<proteinExistence type="inferred from homology"/>
<protein>
    <recommendedName>
        <fullName evidence="1">Large ribosomal subunit protein bL33B</fullName>
    </recommendedName>
    <alternativeName>
        <fullName evidence="1">50S ribosomal protein L33 2</fullName>
    </alternativeName>
</protein>
<dbReference type="EMBL" id="AP008937">
    <property type="protein sequence ID" value="BAG27619.1"/>
    <property type="molecule type" value="Genomic_DNA"/>
</dbReference>
<dbReference type="SMR" id="B2GD87"/>
<dbReference type="KEGG" id="lfe:LAF_1283"/>
<dbReference type="eggNOG" id="COG0267">
    <property type="taxonomic scope" value="Bacteria"/>
</dbReference>
<dbReference type="HOGENOM" id="CLU_190949_0_2_9"/>
<dbReference type="Proteomes" id="UP000001697">
    <property type="component" value="Chromosome"/>
</dbReference>
<dbReference type="GO" id="GO:0005737">
    <property type="term" value="C:cytoplasm"/>
    <property type="evidence" value="ECO:0007669"/>
    <property type="project" value="UniProtKB-ARBA"/>
</dbReference>
<dbReference type="GO" id="GO:1990904">
    <property type="term" value="C:ribonucleoprotein complex"/>
    <property type="evidence" value="ECO:0007669"/>
    <property type="project" value="UniProtKB-KW"/>
</dbReference>
<dbReference type="GO" id="GO:0005840">
    <property type="term" value="C:ribosome"/>
    <property type="evidence" value="ECO:0007669"/>
    <property type="project" value="UniProtKB-KW"/>
</dbReference>
<dbReference type="GO" id="GO:0003735">
    <property type="term" value="F:structural constituent of ribosome"/>
    <property type="evidence" value="ECO:0007669"/>
    <property type="project" value="InterPro"/>
</dbReference>
<dbReference type="GO" id="GO:0006412">
    <property type="term" value="P:translation"/>
    <property type="evidence" value="ECO:0007669"/>
    <property type="project" value="UniProtKB-UniRule"/>
</dbReference>
<dbReference type="Gene3D" id="2.20.28.120">
    <property type="entry name" value="Ribosomal protein L33"/>
    <property type="match status" value="1"/>
</dbReference>
<dbReference type="HAMAP" id="MF_00294">
    <property type="entry name" value="Ribosomal_bL33"/>
    <property type="match status" value="1"/>
</dbReference>
<dbReference type="InterPro" id="IPR001705">
    <property type="entry name" value="Ribosomal_bL33"/>
</dbReference>
<dbReference type="InterPro" id="IPR018264">
    <property type="entry name" value="Ribosomal_bL33_CS"/>
</dbReference>
<dbReference type="InterPro" id="IPR038584">
    <property type="entry name" value="Ribosomal_bL33_sf"/>
</dbReference>
<dbReference type="InterPro" id="IPR011332">
    <property type="entry name" value="Ribosomal_zn-bd"/>
</dbReference>
<dbReference type="NCBIfam" id="NF001764">
    <property type="entry name" value="PRK00504.1"/>
    <property type="match status" value="1"/>
</dbReference>
<dbReference type="NCBIfam" id="NF001860">
    <property type="entry name" value="PRK00595.1"/>
    <property type="match status" value="1"/>
</dbReference>
<dbReference type="NCBIfam" id="TIGR01023">
    <property type="entry name" value="rpmG_bact"/>
    <property type="match status" value="1"/>
</dbReference>
<dbReference type="PANTHER" id="PTHR43168">
    <property type="entry name" value="50S RIBOSOMAL PROTEIN L33, CHLOROPLASTIC"/>
    <property type="match status" value="1"/>
</dbReference>
<dbReference type="PANTHER" id="PTHR43168:SF2">
    <property type="entry name" value="LARGE RIBOSOMAL SUBUNIT PROTEIN BL33C"/>
    <property type="match status" value="1"/>
</dbReference>
<dbReference type="Pfam" id="PF00471">
    <property type="entry name" value="Ribosomal_L33"/>
    <property type="match status" value="1"/>
</dbReference>
<dbReference type="SUPFAM" id="SSF57829">
    <property type="entry name" value="Zn-binding ribosomal proteins"/>
    <property type="match status" value="1"/>
</dbReference>
<dbReference type="PROSITE" id="PS00582">
    <property type="entry name" value="RIBOSOMAL_L33"/>
    <property type="match status" value="1"/>
</dbReference>
<feature type="chain" id="PRO_0000356502" description="Large ribosomal subunit protein bL33B">
    <location>
        <begin position="1"/>
        <end position="49"/>
    </location>
</feature>
<evidence type="ECO:0000255" key="1">
    <source>
        <dbReference type="HAMAP-Rule" id="MF_00294"/>
    </source>
</evidence>
<reference key="1">
    <citation type="journal article" date="2008" name="DNA Res.">
        <title>Comparative genome analysis of Lactobacillus reuteri and Lactobacillus fermentum reveal a genomic island for reuterin and cobalamin production.</title>
        <authorList>
            <person name="Morita H."/>
            <person name="Toh H."/>
            <person name="Fukuda S."/>
            <person name="Horikawa H."/>
            <person name="Oshima K."/>
            <person name="Suzuki T."/>
            <person name="Murakami M."/>
            <person name="Hisamatsu S."/>
            <person name="Kato Y."/>
            <person name="Takizawa T."/>
            <person name="Fukuoka H."/>
            <person name="Yoshimura T."/>
            <person name="Itoh K."/>
            <person name="O'Sullivan D.J."/>
            <person name="McKay L.L."/>
            <person name="Ohno H."/>
            <person name="Kikuchi J."/>
            <person name="Masaoka T."/>
            <person name="Hattori M."/>
        </authorList>
    </citation>
    <scope>NUCLEOTIDE SEQUENCE [LARGE SCALE GENOMIC DNA]</scope>
    <source>
        <strain>NBRC 3956 / LMG 18251</strain>
    </source>
</reference>
<sequence length="49" mass="5984">MRVNITLECTSCHERTYLTSKNRRNNPDRLELNKYCPREHKVVLHRETK</sequence>
<gene>
    <name evidence="1" type="primary">rpmG2</name>
    <name type="ordered locus">LAF_1283</name>
</gene>
<organism>
    <name type="scientific">Limosilactobacillus fermentum (strain NBRC 3956 / LMG 18251)</name>
    <name type="common">Lactobacillus fermentum</name>
    <dbReference type="NCBI Taxonomy" id="334390"/>
    <lineage>
        <taxon>Bacteria</taxon>
        <taxon>Bacillati</taxon>
        <taxon>Bacillota</taxon>
        <taxon>Bacilli</taxon>
        <taxon>Lactobacillales</taxon>
        <taxon>Lactobacillaceae</taxon>
        <taxon>Limosilactobacillus</taxon>
    </lineage>
</organism>
<name>RL332_LIMF3</name>
<comment type="similarity">
    <text evidence="1">Belongs to the bacterial ribosomal protein bL33 family.</text>
</comment>